<comment type="function">
    <text evidence="1">ATP-binding RNA helicase involved in mitochondrial RNA metabolism. Required for maintenance of mitochondrial DNA (By similarity).</text>
</comment>
<comment type="catalytic activity">
    <reaction>
        <text>ATP + H2O = ADP + phosphate + H(+)</text>
        <dbReference type="Rhea" id="RHEA:13065"/>
        <dbReference type="ChEBI" id="CHEBI:15377"/>
        <dbReference type="ChEBI" id="CHEBI:15378"/>
        <dbReference type="ChEBI" id="CHEBI:30616"/>
        <dbReference type="ChEBI" id="CHEBI:43474"/>
        <dbReference type="ChEBI" id="CHEBI:456216"/>
        <dbReference type="EC" id="3.6.4.13"/>
    </reaction>
</comment>
<comment type="subcellular location">
    <subcellularLocation>
        <location evidence="1">Mitochondrion</location>
    </subcellularLocation>
</comment>
<comment type="domain">
    <text>The Q motif is unique to and characteristic of the DEAD box family of RNA helicases and controls ATP binding and hydrolysis.</text>
</comment>
<comment type="similarity">
    <text evidence="5">Belongs to the DEAD box helicase family. MRH4 subfamily.</text>
</comment>
<name>MRH4_VANPO</name>
<accession>A7TE77</accession>
<organism>
    <name type="scientific">Vanderwaltozyma polyspora (strain ATCC 22028 / DSM 70294 / BCRC 21397 / CBS 2163 / NBRC 10782 / NRRL Y-8283 / UCD 57-17)</name>
    <name type="common">Kluyveromyces polysporus</name>
    <dbReference type="NCBI Taxonomy" id="436907"/>
    <lineage>
        <taxon>Eukaryota</taxon>
        <taxon>Fungi</taxon>
        <taxon>Dikarya</taxon>
        <taxon>Ascomycota</taxon>
        <taxon>Saccharomycotina</taxon>
        <taxon>Saccharomycetes</taxon>
        <taxon>Saccharomycetales</taxon>
        <taxon>Saccharomycetaceae</taxon>
        <taxon>Vanderwaltozyma</taxon>
    </lineage>
</organism>
<sequence>MMTSRLPSCFGLRFYAKRAATIRAKPSKLASSVGIGAKRSKKTVKKKGKEVDIFNYGKYVGLKERDPGSETKGKELLDKLSSFDQLKILPEVRNSIKNIIKDETLSKKAKESEDVIPSPIQLIAMKKLSRTLMDPKLQHHAIAAETGSGKTMAYLIPLFDYLKRQETEFPEDWEFMQDKAIIRSVIFLPTHELVDQVYNTVKKTENDLKFHVYKWDSGTKYPEIVEKLKNRIDILITTPAKLLNLFNIRMISRADRLLSEVKFVVLDEADTLLDKSWVEDTHRAIRSLPNTNHLLFCSATIPNDFNDTLERLFPNTIPITTPRLHKLPKSVDFKIIDSSINPFKGSKIKALAQTLYAIANDSSEPGFEKRCIVFTNEKKDVPYIVEKLKVTYGHDCIGLTSNDSVEERLEKIHDFITPPKPITMKKETPKIENEDSVEVEGSNITIGDFSSKTSVKNSNSESSLKVLVSTDLMARGLNFQGVRNLVLYDVPQTSIDLIHRVGRTARMQQRGRVFMITDKKTKSWAKALPKVIKKNMTLK</sequence>
<reference key="1">
    <citation type="journal article" date="2007" name="Proc. Natl. Acad. Sci. U.S.A.">
        <title>Independent sorting-out of thousands of duplicated gene pairs in two yeast species descended from a whole-genome duplication.</title>
        <authorList>
            <person name="Scannell D.R."/>
            <person name="Frank A.C."/>
            <person name="Conant G.C."/>
            <person name="Byrne K.P."/>
            <person name="Woolfit M."/>
            <person name="Wolfe K.H."/>
        </authorList>
    </citation>
    <scope>NUCLEOTIDE SEQUENCE [LARGE SCALE GENOMIC DNA]</scope>
    <source>
        <strain>ATCC 22028 / DSM 70294 / BCRC 21397 / CBS 2163 / NBRC 10782 / NRRL Y-8283 / UCD 57-17</strain>
    </source>
</reference>
<keyword id="KW-0067">ATP-binding</keyword>
<keyword id="KW-0347">Helicase</keyword>
<keyword id="KW-0378">Hydrolase</keyword>
<keyword id="KW-0496">Mitochondrion</keyword>
<keyword id="KW-0547">Nucleotide-binding</keyword>
<keyword id="KW-1185">Reference proteome</keyword>
<keyword id="KW-0694">RNA-binding</keyword>
<keyword id="KW-0809">Transit peptide</keyword>
<proteinExistence type="inferred from homology"/>
<protein>
    <recommendedName>
        <fullName>ATP-dependent RNA helicase MRH4, mitochondrial</fullName>
        <ecNumber>3.6.4.13</ecNumber>
    </recommendedName>
</protein>
<dbReference type="EC" id="3.6.4.13"/>
<dbReference type="EMBL" id="DS480379">
    <property type="protein sequence ID" value="EDO19399.1"/>
    <property type="molecule type" value="Genomic_DNA"/>
</dbReference>
<dbReference type="RefSeq" id="XP_001647257.1">
    <property type="nucleotide sequence ID" value="XM_001647207.1"/>
</dbReference>
<dbReference type="SMR" id="A7TE77"/>
<dbReference type="FunCoup" id="A7TE77">
    <property type="interactions" value="164"/>
</dbReference>
<dbReference type="STRING" id="436907.A7TE77"/>
<dbReference type="GeneID" id="5547749"/>
<dbReference type="KEGG" id="vpo:Kpol_1002p46"/>
<dbReference type="eggNOG" id="KOG0335">
    <property type="taxonomic scope" value="Eukaryota"/>
</dbReference>
<dbReference type="HOGENOM" id="CLU_003041_18_0_1"/>
<dbReference type="InParanoid" id="A7TE77"/>
<dbReference type="OMA" id="HSTIDFI"/>
<dbReference type="OrthoDB" id="10256233at2759"/>
<dbReference type="PhylomeDB" id="A7TE77"/>
<dbReference type="Proteomes" id="UP000000267">
    <property type="component" value="Unassembled WGS sequence"/>
</dbReference>
<dbReference type="GO" id="GO:0005759">
    <property type="term" value="C:mitochondrial matrix"/>
    <property type="evidence" value="ECO:0007669"/>
    <property type="project" value="EnsemblFungi"/>
</dbReference>
<dbReference type="GO" id="GO:0005524">
    <property type="term" value="F:ATP binding"/>
    <property type="evidence" value="ECO:0007669"/>
    <property type="project" value="UniProtKB-KW"/>
</dbReference>
<dbReference type="GO" id="GO:0016887">
    <property type="term" value="F:ATP hydrolysis activity"/>
    <property type="evidence" value="ECO:0007669"/>
    <property type="project" value="RHEA"/>
</dbReference>
<dbReference type="GO" id="GO:1990400">
    <property type="term" value="F:mitochondrial ribosomal large subunit rRNA binding"/>
    <property type="evidence" value="ECO:0007669"/>
    <property type="project" value="EnsemblFungi"/>
</dbReference>
<dbReference type="GO" id="GO:0003724">
    <property type="term" value="F:RNA helicase activity"/>
    <property type="evidence" value="ECO:0007669"/>
    <property type="project" value="UniProtKB-EC"/>
</dbReference>
<dbReference type="GO" id="GO:1902775">
    <property type="term" value="P:mitochondrial large ribosomal subunit assembly"/>
    <property type="evidence" value="ECO:0007669"/>
    <property type="project" value="EnsemblFungi"/>
</dbReference>
<dbReference type="GO" id="GO:0016070">
    <property type="term" value="P:RNA metabolic process"/>
    <property type="evidence" value="ECO:0007669"/>
    <property type="project" value="EnsemblFungi"/>
</dbReference>
<dbReference type="CDD" id="cd18787">
    <property type="entry name" value="SF2_C_DEAD"/>
    <property type="match status" value="1"/>
</dbReference>
<dbReference type="Gene3D" id="3.40.50.300">
    <property type="entry name" value="P-loop containing nucleotide triphosphate hydrolases"/>
    <property type="match status" value="2"/>
</dbReference>
<dbReference type="InterPro" id="IPR011545">
    <property type="entry name" value="DEAD/DEAH_box_helicase_dom"/>
</dbReference>
<dbReference type="InterPro" id="IPR014001">
    <property type="entry name" value="Helicase_ATP-bd"/>
</dbReference>
<dbReference type="InterPro" id="IPR001650">
    <property type="entry name" value="Helicase_C-like"/>
</dbReference>
<dbReference type="InterPro" id="IPR027417">
    <property type="entry name" value="P-loop_NTPase"/>
</dbReference>
<dbReference type="PANTHER" id="PTHR47960">
    <property type="entry name" value="DEAD-BOX ATP-DEPENDENT RNA HELICASE 50"/>
    <property type="match status" value="1"/>
</dbReference>
<dbReference type="Pfam" id="PF00270">
    <property type="entry name" value="DEAD"/>
    <property type="match status" value="1"/>
</dbReference>
<dbReference type="Pfam" id="PF00271">
    <property type="entry name" value="Helicase_C"/>
    <property type="match status" value="1"/>
</dbReference>
<dbReference type="SMART" id="SM00487">
    <property type="entry name" value="DEXDc"/>
    <property type="match status" value="1"/>
</dbReference>
<dbReference type="SMART" id="SM00490">
    <property type="entry name" value="HELICc"/>
    <property type="match status" value="1"/>
</dbReference>
<dbReference type="SUPFAM" id="SSF52540">
    <property type="entry name" value="P-loop containing nucleoside triphosphate hydrolases"/>
    <property type="match status" value="1"/>
</dbReference>
<dbReference type="PROSITE" id="PS51192">
    <property type="entry name" value="HELICASE_ATP_BIND_1"/>
    <property type="match status" value="1"/>
</dbReference>
<dbReference type="PROSITE" id="PS51194">
    <property type="entry name" value="HELICASE_CTER"/>
    <property type="match status" value="1"/>
</dbReference>
<gene>
    <name type="primary">MRH4</name>
    <name type="ORF">Kpol_1002p46</name>
</gene>
<evidence type="ECO:0000250" key="1"/>
<evidence type="ECO:0000255" key="2"/>
<evidence type="ECO:0000255" key="3">
    <source>
        <dbReference type="PROSITE-ProRule" id="PRU00541"/>
    </source>
</evidence>
<evidence type="ECO:0000255" key="4">
    <source>
        <dbReference type="PROSITE-ProRule" id="PRU00542"/>
    </source>
</evidence>
<evidence type="ECO:0000305" key="5"/>
<feature type="transit peptide" description="Mitochondrion" evidence="2">
    <location>
        <begin position="1"/>
        <end position="24"/>
    </location>
</feature>
<feature type="chain" id="PRO_0000310261" description="ATP-dependent RNA helicase MRH4, mitochondrial">
    <location>
        <begin position="25"/>
        <end position="539"/>
    </location>
</feature>
<feature type="domain" description="Helicase ATP-binding" evidence="3">
    <location>
        <begin position="131"/>
        <end position="319"/>
    </location>
</feature>
<feature type="domain" description="Helicase C-terminal" evidence="4">
    <location>
        <begin position="350"/>
        <end position="539"/>
    </location>
</feature>
<feature type="short sequence motif" description="Q motif" evidence="1">
    <location>
        <begin position="81"/>
        <end position="109"/>
    </location>
</feature>
<feature type="short sequence motif" description="DEAD box">
    <location>
        <begin position="267"/>
        <end position="270"/>
    </location>
</feature>
<feature type="binding site" evidence="3">
    <location>
        <begin position="144"/>
        <end position="151"/>
    </location>
    <ligand>
        <name>ATP</name>
        <dbReference type="ChEBI" id="CHEBI:30616"/>
    </ligand>
</feature>